<sequence length="130" mass="14336">MIGNWNYGTGRRKSAVARVFIKSGKGDIIVNGKPVADYFARETSLMMVRQPLELTNHGATFDIKVNVVGGGETGQAGAVRHGITRALIDYDATLKPTLSKAGLVTRDAREVERKKVGLHKARRRKQFSKR</sequence>
<name>RS9_RALN1</name>
<keyword id="KW-1185">Reference proteome</keyword>
<keyword id="KW-0687">Ribonucleoprotein</keyword>
<keyword id="KW-0689">Ribosomal protein</keyword>
<protein>
    <recommendedName>
        <fullName evidence="1">Small ribosomal subunit protein uS9</fullName>
    </recommendedName>
    <alternativeName>
        <fullName evidence="2">30S ribosomal protein S9</fullName>
    </alternativeName>
</protein>
<accession>Q8Y245</accession>
<organism>
    <name type="scientific">Ralstonia nicotianae (strain ATCC BAA-1114 / GMI1000)</name>
    <name type="common">Ralstonia solanacearum</name>
    <dbReference type="NCBI Taxonomy" id="267608"/>
    <lineage>
        <taxon>Bacteria</taxon>
        <taxon>Pseudomonadati</taxon>
        <taxon>Pseudomonadota</taxon>
        <taxon>Betaproteobacteria</taxon>
        <taxon>Burkholderiales</taxon>
        <taxon>Burkholderiaceae</taxon>
        <taxon>Ralstonia</taxon>
        <taxon>Ralstonia solanacearum species complex</taxon>
    </lineage>
</organism>
<gene>
    <name evidence="1" type="primary">rpsI</name>
    <name type="ordered locus">RSc0491</name>
    <name type="ORF">RS05034</name>
</gene>
<proteinExistence type="inferred from homology"/>
<dbReference type="EMBL" id="AL646052">
    <property type="protein sequence ID" value="CAD14019.1"/>
    <property type="molecule type" value="Genomic_DNA"/>
</dbReference>
<dbReference type="RefSeq" id="WP_011000451.1">
    <property type="nucleotide sequence ID" value="NC_003295.1"/>
</dbReference>
<dbReference type="SMR" id="Q8Y245"/>
<dbReference type="STRING" id="267608.RSc0491"/>
<dbReference type="EnsemblBacteria" id="CAD14019">
    <property type="protein sequence ID" value="CAD14019"/>
    <property type="gene ID" value="RSc0491"/>
</dbReference>
<dbReference type="GeneID" id="93853783"/>
<dbReference type="KEGG" id="rso:RSc0491"/>
<dbReference type="eggNOG" id="COG0103">
    <property type="taxonomic scope" value="Bacteria"/>
</dbReference>
<dbReference type="HOGENOM" id="CLU_046483_2_1_4"/>
<dbReference type="Proteomes" id="UP000001436">
    <property type="component" value="Chromosome"/>
</dbReference>
<dbReference type="GO" id="GO:0022627">
    <property type="term" value="C:cytosolic small ribosomal subunit"/>
    <property type="evidence" value="ECO:0007669"/>
    <property type="project" value="TreeGrafter"/>
</dbReference>
<dbReference type="GO" id="GO:0003723">
    <property type="term" value="F:RNA binding"/>
    <property type="evidence" value="ECO:0007669"/>
    <property type="project" value="TreeGrafter"/>
</dbReference>
<dbReference type="GO" id="GO:0003735">
    <property type="term" value="F:structural constituent of ribosome"/>
    <property type="evidence" value="ECO:0007669"/>
    <property type="project" value="InterPro"/>
</dbReference>
<dbReference type="GO" id="GO:0006412">
    <property type="term" value="P:translation"/>
    <property type="evidence" value="ECO:0007669"/>
    <property type="project" value="UniProtKB-UniRule"/>
</dbReference>
<dbReference type="FunFam" id="3.30.230.10:FF:000001">
    <property type="entry name" value="30S ribosomal protein S9"/>
    <property type="match status" value="1"/>
</dbReference>
<dbReference type="Gene3D" id="3.30.230.10">
    <property type="match status" value="1"/>
</dbReference>
<dbReference type="HAMAP" id="MF_00532_B">
    <property type="entry name" value="Ribosomal_uS9_B"/>
    <property type="match status" value="1"/>
</dbReference>
<dbReference type="InterPro" id="IPR020568">
    <property type="entry name" value="Ribosomal_Su5_D2-typ_SF"/>
</dbReference>
<dbReference type="InterPro" id="IPR000754">
    <property type="entry name" value="Ribosomal_uS9"/>
</dbReference>
<dbReference type="InterPro" id="IPR023035">
    <property type="entry name" value="Ribosomal_uS9_bac/plastid"/>
</dbReference>
<dbReference type="InterPro" id="IPR020574">
    <property type="entry name" value="Ribosomal_uS9_CS"/>
</dbReference>
<dbReference type="InterPro" id="IPR014721">
    <property type="entry name" value="Ribsml_uS5_D2-typ_fold_subgr"/>
</dbReference>
<dbReference type="NCBIfam" id="NF001099">
    <property type="entry name" value="PRK00132.1"/>
    <property type="match status" value="1"/>
</dbReference>
<dbReference type="PANTHER" id="PTHR21569">
    <property type="entry name" value="RIBOSOMAL PROTEIN S9"/>
    <property type="match status" value="1"/>
</dbReference>
<dbReference type="PANTHER" id="PTHR21569:SF1">
    <property type="entry name" value="SMALL RIBOSOMAL SUBUNIT PROTEIN US9M"/>
    <property type="match status" value="1"/>
</dbReference>
<dbReference type="Pfam" id="PF00380">
    <property type="entry name" value="Ribosomal_S9"/>
    <property type="match status" value="1"/>
</dbReference>
<dbReference type="SUPFAM" id="SSF54211">
    <property type="entry name" value="Ribosomal protein S5 domain 2-like"/>
    <property type="match status" value="1"/>
</dbReference>
<dbReference type="PROSITE" id="PS00360">
    <property type="entry name" value="RIBOSOMAL_S9"/>
    <property type="match status" value="1"/>
</dbReference>
<reference key="1">
    <citation type="journal article" date="2002" name="Nature">
        <title>Genome sequence of the plant pathogen Ralstonia solanacearum.</title>
        <authorList>
            <person name="Salanoubat M."/>
            <person name="Genin S."/>
            <person name="Artiguenave F."/>
            <person name="Gouzy J."/>
            <person name="Mangenot S."/>
            <person name="Arlat M."/>
            <person name="Billault A."/>
            <person name="Brottier P."/>
            <person name="Camus J.-C."/>
            <person name="Cattolico L."/>
            <person name="Chandler M."/>
            <person name="Choisne N."/>
            <person name="Claudel-Renard C."/>
            <person name="Cunnac S."/>
            <person name="Demange N."/>
            <person name="Gaspin C."/>
            <person name="Lavie M."/>
            <person name="Moisan A."/>
            <person name="Robert C."/>
            <person name="Saurin W."/>
            <person name="Schiex T."/>
            <person name="Siguier P."/>
            <person name="Thebault P."/>
            <person name="Whalen M."/>
            <person name="Wincker P."/>
            <person name="Levy M."/>
            <person name="Weissenbach J."/>
            <person name="Boucher C.A."/>
        </authorList>
    </citation>
    <scope>NUCLEOTIDE SEQUENCE [LARGE SCALE GENOMIC DNA]</scope>
    <source>
        <strain>ATCC BAA-1114 / GMI1000</strain>
    </source>
</reference>
<evidence type="ECO:0000255" key="1">
    <source>
        <dbReference type="HAMAP-Rule" id="MF_00532"/>
    </source>
</evidence>
<evidence type="ECO:0000305" key="2"/>
<comment type="similarity">
    <text evidence="1">Belongs to the universal ribosomal protein uS9 family.</text>
</comment>
<feature type="chain" id="PRO_0000111394" description="Small ribosomal subunit protein uS9">
    <location>
        <begin position="1"/>
        <end position="130"/>
    </location>
</feature>